<evidence type="ECO:0000255" key="1">
    <source>
        <dbReference type="HAMAP-Rule" id="MF_01554"/>
    </source>
</evidence>
<feature type="chain" id="PRO_1000201106" description="Phosphoglucosamine mutase">
    <location>
        <begin position="1"/>
        <end position="445"/>
    </location>
</feature>
<feature type="active site" description="Phosphoserine intermediate" evidence="1">
    <location>
        <position position="99"/>
    </location>
</feature>
<feature type="binding site" description="via phosphate group" evidence="1">
    <location>
        <position position="99"/>
    </location>
    <ligand>
        <name>Mg(2+)</name>
        <dbReference type="ChEBI" id="CHEBI:18420"/>
    </ligand>
</feature>
<feature type="binding site" evidence="1">
    <location>
        <position position="242"/>
    </location>
    <ligand>
        <name>Mg(2+)</name>
        <dbReference type="ChEBI" id="CHEBI:18420"/>
    </ligand>
</feature>
<feature type="binding site" evidence="1">
    <location>
        <position position="244"/>
    </location>
    <ligand>
        <name>Mg(2+)</name>
        <dbReference type="ChEBI" id="CHEBI:18420"/>
    </ligand>
</feature>
<feature type="binding site" evidence="1">
    <location>
        <position position="246"/>
    </location>
    <ligand>
        <name>Mg(2+)</name>
        <dbReference type="ChEBI" id="CHEBI:18420"/>
    </ligand>
</feature>
<feature type="modified residue" description="Phosphoserine" evidence="1">
    <location>
        <position position="99"/>
    </location>
</feature>
<accession>B5Z677</accession>
<name>GLMM_HELPG</name>
<proteinExistence type="inferred from homology"/>
<keyword id="KW-0413">Isomerase</keyword>
<keyword id="KW-0460">Magnesium</keyword>
<keyword id="KW-0479">Metal-binding</keyword>
<keyword id="KW-0597">Phosphoprotein</keyword>
<keyword id="KW-1185">Reference proteome</keyword>
<sequence length="445" mass="49157">MKIFGTDGVRGKAGVKLTPMFVMRLGIAAGLYFKKHSQTNKILIGKDTRKSGYMVENALVSALTSIGYNVIQIGPMPTPAIAFLTEDMRCDAGIMISASHNPFEDNGIKFFNSYGYKLKEEEEKAIEEIFHDEELLHSSYKVGESIGSAKRIDDVIGRYIVHLKHSFPKHLNLQSLRIVLDTANGAAYKVAPVVFSELGADVLVINDEPNGCNINEQCGALHPNQLSQEVKKYRADLGFAFDGDADRLVVVDNLGNIVHGDKLLGVLGVYQKSKNALSSQAIVATSMSNLALKEYLKSQDLELKHCAIGDKFVSECMRLNKANFGGEQSGHIIFSDYAKTGDGLVCALQVSALVLESKQASSVALNPFELYPQNLVNLNVQKKPPLESLKGYSALLKELDQLEIRHLIRYSGTENKLRILLEAKDEKLLESKMQELKEFFEGHLC</sequence>
<dbReference type="EC" id="5.4.2.10" evidence="1"/>
<dbReference type="EMBL" id="CP001173">
    <property type="protein sequence ID" value="ACI26841.1"/>
    <property type="molecule type" value="Genomic_DNA"/>
</dbReference>
<dbReference type="RefSeq" id="WP_000688390.1">
    <property type="nucleotide sequence ID" value="NC_011333.1"/>
</dbReference>
<dbReference type="SMR" id="B5Z677"/>
<dbReference type="KEGG" id="hpg:HPG27_70"/>
<dbReference type="HOGENOM" id="CLU_016950_7_0_7"/>
<dbReference type="Proteomes" id="UP000001735">
    <property type="component" value="Chromosome"/>
</dbReference>
<dbReference type="GO" id="GO:0005829">
    <property type="term" value="C:cytosol"/>
    <property type="evidence" value="ECO:0007669"/>
    <property type="project" value="TreeGrafter"/>
</dbReference>
<dbReference type="GO" id="GO:0000287">
    <property type="term" value="F:magnesium ion binding"/>
    <property type="evidence" value="ECO:0007669"/>
    <property type="project" value="UniProtKB-UniRule"/>
</dbReference>
<dbReference type="GO" id="GO:0008966">
    <property type="term" value="F:phosphoglucosamine mutase activity"/>
    <property type="evidence" value="ECO:0007669"/>
    <property type="project" value="UniProtKB-UniRule"/>
</dbReference>
<dbReference type="GO" id="GO:0004615">
    <property type="term" value="F:phosphomannomutase activity"/>
    <property type="evidence" value="ECO:0007669"/>
    <property type="project" value="TreeGrafter"/>
</dbReference>
<dbReference type="GO" id="GO:0005975">
    <property type="term" value="P:carbohydrate metabolic process"/>
    <property type="evidence" value="ECO:0007669"/>
    <property type="project" value="InterPro"/>
</dbReference>
<dbReference type="GO" id="GO:0009252">
    <property type="term" value="P:peptidoglycan biosynthetic process"/>
    <property type="evidence" value="ECO:0007669"/>
    <property type="project" value="TreeGrafter"/>
</dbReference>
<dbReference type="GO" id="GO:0006048">
    <property type="term" value="P:UDP-N-acetylglucosamine biosynthetic process"/>
    <property type="evidence" value="ECO:0007669"/>
    <property type="project" value="TreeGrafter"/>
</dbReference>
<dbReference type="CDD" id="cd05802">
    <property type="entry name" value="GlmM"/>
    <property type="match status" value="1"/>
</dbReference>
<dbReference type="FunFam" id="3.30.310.50:FF:000013">
    <property type="entry name" value="Phosphoglucosamine mutase"/>
    <property type="match status" value="1"/>
</dbReference>
<dbReference type="FunFam" id="3.40.120.10:FF:000001">
    <property type="entry name" value="Phosphoglucosamine mutase"/>
    <property type="match status" value="1"/>
</dbReference>
<dbReference type="FunFam" id="3.40.120.10:FF:000003">
    <property type="entry name" value="Phosphoglucosamine mutase"/>
    <property type="match status" value="1"/>
</dbReference>
<dbReference type="Gene3D" id="3.40.120.10">
    <property type="entry name" value="Alpha-D-Glucose-1,6-Bisphosphate, subunit A, domain 3"/>
    <property type="match status" value="3"/>
</dbReference>
<dbReference type="Gene3D" id="3.30.310.50">
    <property type="entry name" value="Alpha-D-phosphohexomutase, C-terminal domain"/>
    <property type="match status" value="1"/>
</dbReference>
<dbReference type="HAMAP" id="MF_01554_B">
    <property type="entry name" value="GlmM_B"/>
    <property type="match status" value="1"/>
</dbReference>
<dbReference type="InterPro" id="IPR005844">
    <property type="entry name" value="A-D-PHexomutase_a/b/a-I"/>
</dbReference>
<dbReference type="InterPro" id="IPR016055">
    <property type="entry name" value="A-D-PHexomutase_a/b/a-I/II/III"/>
</dbReference>
<dbReference type="InterPro" id="IPR005845">
    <property type="entry name" value="A-D-PHexomutase_a/b/a-II"/>
</dbReference>
<dbReference type="InterPro" id="IPR005846">
    <property type="entry name" value="A-D-PHexomutase_a/b/a-III"/>
</dbReference>
<dbReference type="InterPro" id="IPR005843">
    <property type="entry name" value="A-D-PHexomutase_C"/>
</dbReference>
<dbReference type="InterPro" id="IPR036900">
    <property type="entry name" value="A-D-PHexomutase_C_sf"/>
</dbReference>
<dbReference type="InterPro" id="IPR016066">
    <property type="entry name" value="A-D-PHexomutase_CS"/>
</dbReference>
<dbReference type="InterPro" id="IPR005841">
    <property type="entry name" value="Alpha-D-phosphohexomutase_SF"/>
</dbReference>
<dbReference type="InterPro" id="IPR006352">
    <property type="entry name" value="GlmM_bact"/>
</dbReference>
<dbReference type="InterPro" id="IPR050060">
    <property type="entry name" value="Phosphoglucosamine_mutase"/>
</dbReference>
<dbReference type="NCBIfam" id="TIGR01455">
    <property type="entry name" value="glmM"/>
    <property type="match status" value="1"/>
</dbReference>
<dbReference type="PANTHER" id="PTHR42946:SF1">
    <property type="entry name" value="PHOSPHOGLUCOMUTASE (ALPHA-D-GLUCOSE-1,6-BISPHOSPHATE-DEPENDENT)"/>
    <property type="match status" value="1"/>
</dbReference>
<dbReference type="PANTHER" id="PTHR42946">
    <property type="entry name" value="PHOSPHOHEXOSE MUTASE"/>
    <property type="match status" value="1"/>
</dbReference>
<dbReference type="Pfam" id="PF02878">
    <property type="entry name" value="PGM_PMM_I"/>
    <property type="match status" value="1"/>
</dbReference>
<dbReference type="Pfam" id="PF02879">
    <property type="entry name" value="PGM_PMM_II"/>
    <property type="match status" value="1"/>
</dbReference>
<dbReference type="Pfam" id="PF02880">
    <property type="entry name" value="PGM_PMM_III"/>
    <property type="match status" value="1"/>
</dbReference>
<dbReference type="Pfam" id="PF00408">
    <property type="entry name" value="PGM_PMM_IV"/>
    <property type="match status" value="1"/>
</dbReference>
<dbReference type="PRINTS" id="PR00509">
    <property type="entry name" value="PGMPMM"/>
</dbReference>
<dbReference type="SUPFAM" id="SSF55957">
    <property type="entry name" value="Phosphoglucomutase, C-terminal domain"/>
    <property type="match status" value="1"/>
</dbReference>
<dbReference type="SUPFAM" id="SSF53738">
    <property type="entry name" value="Phosphoglucomutase, first 3 domains"/>
    <property type="match status" value="3"/>
</dbReference>
<dbReference type="PROSITE" id="PS00710">
    <property type="entry name" value="PGM_PMM"/>
    <property type="match status" value="1"/>
</dbReference>
<comment type="function">
    <text evidence="1">Catalyzes the conversion of glucosamine-6-phosphate to glucosamine-1-phosphate.</text>
</comment>
<comment type="catalytic activity">
    <reaction evidence="1">
        <text>alpha-D-glucosamine 1-phosphate = D-glucosamine 6-phosphate</text>
        <dbReference type="Rhea" id="RHEA:23424"/>
        <dbReference type="ChEBI" id="CHEBI:58516"/>
        <dbReference type="ChEBI" id="CHEBI:58725"/>
        <dbReference type="EC" id="5.4.2.10"/>
    </reaction>
</comment>
<comment type="cofactor">
    <cofactor evidence="1">
        <name>Mg(2+)</name>
        <dbReference type="ChEBI" id="CHEBI:18420"/>
    </cofactor>
    <text evidence="1">Binds 1 Mg(2+) ion per subunit.</text>
</comment>
<comment type="PTM">
    <text evidence="1">Activated by phosphorylation.</text>
</comment>
<comment type="similarity">
    <text evidence="1">Belongs to the phosphohexose mutase family.</text>
</comment>
<reference key="1">
    <citation type="journal article" date="2009" name="J. Bacteriol.">
        <title>The complete genome sequence of Helicobacter pylori strain G27.</title>
        <authorList>
            <person name="Baltrus D.A."/>
            <person name="Amieva M.R."/>
            <person name="Covacci A."/>
            <person name="Lowe T.M."/>
            <person name="Merrell D.S."/>
            <person name="Ottemann K.M."/>
            <person name="Stein M."/>
            <person name="Salama N.R."/>
            <person name="Guillemin K."/>
        </authorList>
    </citation>
    <scope>NUCLEOTIDE SEQUENCE [LARGE SCALE GENOMIC DNA]</scope>
    <source>
        <strain>G27</strain>
    </source>
</reference>
<organism>
    <name type="scientific">Helicobacter pylori (strain G27)</name>
    <dbReference type="NCBI Taxonomy" id="563041"/>
    <lineage>
        <taxon>Bacteria</taxon>
        <taxon>Pseudomonadati</taxon>
        <taxon>Campylobacterota</taxon>
        <taxon>Epsilonproteobacteria</taxon>
        <taxon>Campylobacterales</taxon>
        <taxon>Helicobacteraceae</taxon>
        <taxon>Helicobacter</taxon>
    </lineage>
</organism>
<gene>
    <name evidence="1" type="primary">glmM</name>
    <name type="ordered locus">HPG27_70</name>
</gene>
<protein>
    <recommendedName>
        <fullName evidence="1">Phosphoglucosamine mutase</fullName>
        <ecNumber evidence="1">5.4.2.10</ecNumber>
    </recommendedName>
</protein>